<proteinExistence type="evidence at protein level"/>
<evidence type="ECO:0000250" key="1"/>
<evidence type="ECO:0000256" key="2">
    <source>
        <dbReference type="SAM" id="MobiDB-lite"/>
    </source>
</evidence>
<evidence type="ECO:0000269" key="3">
    <source>
    </source>
</evidence>
<evidence type="ECO:0000269" key="4">
    <source>
    </source>
</evidence>
<evidence type="ECO:0000269" key="5">
    <source>
    </source>
</evidence>
<evidence type="ECO:0000269" key="6">
    <source>
    </source>
</evidence>
<evidence type="ECO:0000269" key="7">
    <source>
    </source>
</evidence>
<evidence type="ECO:0000269" key="8">
    <source>
    </source>
</evidence>
<evidence type="ECO:0000269" key="9">
    <source>
    </source>
</evidence>
<evidence type="ECO:0000305" key="10"/>
<evidence type="ECO:0007744" key="11">
    <source>
        <dbReference type="PDB" id="1K6I"/>
    </source>
</evidence>
<evidence type="ECO:0007744" key="12">
    <source>
        <dbReference type="PDB" id="1K6J"/>
    </source>
</evidence>
<evidence type="ECO:0007744" key="13">
    <source>
        <dbReference type="PDB" id="1K6X"/>
    </source>
</evidence>
<evidence type="ECO:0007744" key="14">
    <source>
        <dbReference type="PDB" id="1TI7"/>
    </source>
</evidence>
<evidence type="ECO:0007829" key="15">
    <source>
        <dbReference type="PDB" id="1K6I"/>
    </source>
</evidence>
<evidence type="ECO:0007829" key="16">
    <source>
        <dbReference type="PDB" id="1K6J"/>
    </source>
</evidence>
<evidence type="ECO:0007829" key="17">
    <source>
        <dbReference type="PDB" id="1TI7"/>
    </source>
</evidence>
<evidence type="ECO:0007829" key="18">
    <source>
        <dbReference type="PDB" id="1XGK"/>
    </source>
</evidence>
<evidence type="ECO:0007829" key="19">
    <source>
        <dbReference type="PDB" id="2VUT"/>
    </source>
</evidence>
<organism>
    <name type="scientific">Emericella nidulans (strain FGSC A4 / ATCC 38163 / CBS 112.46 / NRRL 194 / M139)</name>
    <name type="common">Aspergillus nidulans</name>
    <dbReference type="NCBI Taxonomy" id="227321"/>
    <lineage>
        <taxon>Eukaryota</taxon>
        <taxon>Fungi</taxon>
        <taxon>Dikarya</taxon>
        <taxon>Ascomycota</taxon>
        <taxon>Pezizomycotina</taxon>
        <taxon>Eurotiomycetes</taxon>
        <taxon>Eurotiomycetidae</taxon>
        <taxon>Eurotiales</taxon>
        <taxon>Aspergillaceae</taxon>
        <taxon>Aspergillus</taxon>
        <taxon>Aspergillus subgen. Nidulantes</taxon>
    </lineage>
</organism>
<name>NMRA_EMENI</name>
<reference key="1">
    <citation type="journal article" date="1998" name="J. Bacteriol.">
        <title>Characterization of the Aspergillus nidulans nmrA gene involved in nitrogen metabolite repression.</title>
        <authorList>
            <person name="Andrianopoulos A."/>
            <person name="Kourambas S."/>
            <person name="Sharp J.A."/>
            <person name="Davis M.A."/>
            <person name="Hynes M.J."/>
        </authorList>
    </citation>
    <scope>NUCLEOTIDE SEQUENCE [GENOMIC DNA]</scope>
    <scope>DISRUPTION PHENOTYPE</scope>
</reference>
<reference key="2">
    <citation type="journal article" date="2005" name="Nature">
        <title>Sequencing of Aspergillus nidulans and comparative analysis with A. fumigatus and A. oryzae.</title>
        <authorList>
            <person name="Galagan J.E."/>
            <person name="Calvo S.E."/>
            <person name="Cuomo C."/>
            <person name="Ma L.-J."/>
            <person name="Wortman J.R."/>
            <person name="Batzoglou S."/>
            <person name="Lee S.-I."/>
            <person name="Bastuerkmen M."/>
            <person name="Spevak C.C."/>
            <person name="Clutterbuck J."/>
            <person name="Kapitonov V."/>
            <person name="Jurka J."/>
            <person name="Scazzocchio C."/>
            <person name="Farman M.L."/>
            <person name="Butler J."/>
            <person name="Purcell S."/>
            <person name="Harris S."/>
            <person name="Braus G.H."/>
            <person name="Draht O."/>
            <person name="Busch S."/>
            <person name="D'Enfert C."/>
            <person name="Bouchier C."/>
            <person name="Goldman G.H."/>
            <person name="Bell-Pedersen D."/>
            <person name="Griffiths-Jones S."/>
            <person name="Doonan J.H."/>
            <person name="Yu J."/>
            <person name="Vienken K."/>
            <person name="Pain A."/>
            <person name="Freitag M."/>
            <person name="Selker E.U."/>
            <person name="Archer D.B."/>
            <person name="Penalva M.A."/>
            <person name="Oakley B.R."/>
            <person name="Momany M."/>
            <person name="Tanaka T."/>
            <person name="Kumagai T."/>
            <person name="Asai K."/>
            <person name="Machida M."/>
            <person name="Nierman W.C."/>
            <person name="Denning D.W."/>
            <person name="Caddick M.X."/>
            <person name="Hynes M."/>
            <person name="Paoletti M."/>
            <person name="Fischer R."/>
            <person name="Miller B.L."/>
            <person name="Dyer P.S."/>
            <person name="Sachs M.S."/>
            <person name="Osmani S.A."/>
            <person name="Birren B.W."/>
        </authorList>
    </citation>
    <scope>NUCLEOTIDE SEQUENCE [LARGE SCALE GENOMIC DNA]</scope>
    <source>
        <strain>FGSC A4 / ATCC 38163 / CBS 112.46 / NRRL 194 / M139</strain>
    </source>
</reference>
<reference key="3">
    <citation type="journal article" date="2009" name="Fungal Genet. Biol.">
        <title>The 2008 update of the Aspergillus nidulans genome annotation: a community effort.</title>
        <authorList>
            <person name="Wortman J.R."/>
            <person name="Gilsenan J.M."/>
            <person name="Joardar V."/>
            <person name="Deegan J."/>
            <person name="Clutterbuck J."/>
            <person name="Andersen M.R."/>
            <person name="Archer D."/>
            <person name="Bencina M."/>
            <person name="Braus G."/>
            <person name="Coutinho P."/>
            <person name="von Dohren H."/>
            <person name="Doonan J."/>
            <person name="Driessen A.J."/>
            <person name="Durek P."/>
            <person name="Espeso E."/>
            <person name="Fekete E."/>
            <person name="Flipphi M."/>
            <person name="Estrada C.G."/>
            <person name="Geysens S."/>
            <person name="Goldman G."/>
            <person name="de Groot P.W."/>
            <person name="Hansen K."/>
            <person name="Harris S.D."/>
            <person name="Heinekamp T."/>
            <person name="Helmstaedt K."/>
            <person name="Henrissat B."/>
            <person name="Hofmann G."/>
            <person name="Homan T."/>
            <person name="Horio T."/>
            <person name="Horiuchi H."/>
            <person name="James S."/>
            <person name="Jones M."/>
            <person name="Karaffa L."/>
            <person name="Karanyi Z."/>
            <person name="Kato M."/>
            <person name="Keller N."/>
            <person name="Kelly D.E."/>
            <person name="Kiel J.A."/>
            <person name="Kim J.M."/>
            <person name="van der Klei I.J."/>
            <person name="Klis F.M."/>
            <person name="Kovalchuk A."/>
            <person name="Krasevec N."/>
            <person name="Kubicek C.P."/>
            <person name="Liu B."/>
            <person name="Maccabe A."/>
            <person name="Meyer V."/>
            <person name="Mirabito P."/>
            <person name="Miskei M."/>
            <person name="Mos M."/>
            <person name="Mullins J."/>
            <person name="Nelson D.R."/>
            <person name="Nielsen J."/>
            <person name="Oakley B.R."/>
            <person name="Osmani S.A."/>
            <person name="Pakula T."/>
            <person name="Paszewski A."/>
            <person name="Paulsen I."/>
            <person name="Pilsyk S."/>
            <person name="Pocsi I."/>
            <person name="Punt P.J."/>
            <person name="Ram A.F."/>
            <person name="Ren Q."/>
            <person name="Robellet X."/>
            <person name="Robson G."/>
            <person name="Seiboth B."/>
            <person name="van Solingen P."/>
            <person name="Specht T."/>
            <person name="Sun J."/>
            <person name="Taheri-Talesh N."/>
            <person name="Takeshita N."/>
            <person name="Ussery D."/>
            <person name="vanKuyk P.A."/>
            <person name="Visser H."/>
            <person name="van de Vondervoort P.J."/>
            <person name="de Vries R.P."/>
            <person name="Walton J."/>
            <person name="Xiang X."/>
            <person name="Xiong Y."/>
            <person name="Zeng A.P."/>
            <person name="Brandt B.W."/>
            <person name="Cornell M.J."/>
            <person name="van den Hondel C.A."/>
            <person name="Visser J."/>
            <person name="Oliver S.G."/>
            <person name="Turner G."/>
        </authorList>
    </citation>
    <scope>GENOME REANNOTATION</scope>
    <source>
        <strain>FGSC A4 / ATCC 38163 / CBS 112.46 / NRRL 194 / M139</strain>
    </source>
</reference>
<reference key="4">
    <citation type="journal article" date="2001" name="Acta Crystallogr. D">
        <title>Expression, purification and crystallization of Aspergillus nidulans NmrA, a negative regulatory protein involved in nitrogen-metabolite repression.</title>
        <authorList>
            <person name="Nichols C.E."/>
            <person name="Cocklin S."/>
            <person name="Dodds A."/>
            <person name="Ren J."/>
            <person name="Lamb H."/>
            <person name="Hawkins A.R."/>
            <person name="Stammers D.K."/>
        </authorList>
    </citation>
    <scope>SUBUNIT</scope>
</reference>
<reference key="5">
    <citation type="journal article" date="2007" name="Mol. Microbiol.">
        <title>Transcriptional control of nmrA by the bZIP transcription factor MeaB reveals a new level of nitrogen regulation in Aspergillus nidulans.</title>
        <authorList>
            <person name="Wong K.H."/>
            <person name="Hynes M.J."/>
            <person name="Todd R.B."/>
            <person name="Davis M.A."/>
        </authorList>
    </citation>
    <scope>FUNCTION</scope>
    <scope>SUBCELLULAR LOCATION</scope>
    <scope>INDUCTION BY NITROGEN</scope>
</reference>
<reference evidence="11 12 13" key="6">
    <citation type="journal article" date="2001" name="EMBO J.">
        <title>The structure of the negative transcriptional regulator NmrA reveals a structural superfamily which includes the short-chain dehydrogenase/reductases.</title>
        <authorList>
            <person name="Stammers D.K."/>
            <person name="Ren J."/>
            <person name="Leslie K."/>
            <person name="Nichols C.E."/>
            <person name="Lamb H.K."/>
            <person name="Cocklin S."/>
            <person name="Dodds A."/>
            <person name="Hawkins A.R."/>
        </authorList>
    </citation>
    <scope>X-RAY CRYSTALLOGRAPHY (1.5 ANGSTROMS) IN COMPLEX WITH NAD</scope>
</reference>
<reference evidence="14" key="7">
    <citation type="journal article" date="2003" name="J. Biol. Chem.">
        <title>The negative transcriptional regulator NmrA discriminates between oxidized and reduced dinucleotides.</title>
        <authorList>
            <person name="Lamb H.K."/>
            <person name="Leslie K."/>
            <person name="Dodds A.L."/>
            <person name="Nutley M."/>
            <person name="Cooper A."/>
            <person name="Johnson C."/>
            <person name="Thompson P."/>
            <person name="Stammers D.K."/>
            <person name="Hawkins A.R."/>
        </authorList>
    </citation>
    <scope>X-RAY CRYSTALLOGRAPHY (1.7 ANGSTROMS) IN COMPLEXES WITH NADP</scope>
    <scope>FUNCTION</scope>
    <scope>INTERACTION WITH AREA</scope>
</reference>
<reference key="8">
    <citation type="journal article" date="2004" name="Protein Sci.">
        <title>Modulation of the ligand binding properties of the transcription repressor NmrA by GATA-containing DNA and site-directed mutagenesis.</title>
        <authorList>
            <person name="Lamb H.K."/>
            <person name="Ren J."/>
            <person name="Park A."/>
            <person name="Johnson C."/>
            <person name="Leslie K."/>
            <person name="Cocklin S."/>
            <person name="Thompson P."/>
            <person name="Mee C."/>
            <person name="Cooper A."/>
            <person name="Stammers D.K."/>
            <person name="Hawkins A.R."/>
        </authorList>
    </citation>
    <scope>X-RAY CRYSTALLOGRAPHY (1.4 ANGSTROMS) OF MUTANT GLY-12/GLY-18 APOPROTEIN</scope>
    <scope>INTERACTION WITH AREA</scope>
    <scope>FUNCTION</scope>
    <scope>MUTAGENESIS OF ASN-12; THR-14; ALA-18; HIS-37; GLU-193; ASP-195; GLN-202; PHE-204; GLU-263 AND GLU-266</scope>
</reference>
<reference key="9">
    <citation type="journal article" date="2008" name="J. Mol. Biol.">
        <title>Structural analysis of the recognition of the negative regulator NmrA and DNA by the zinc finger from the GATA-type transcription factor AreA.</title>
        <authorList>
            <person name="Kotaka M."/>
            <person name="Johnson C."/>
            <person name="Lamb H.K."/>
            <person name="Hawkins A.R."/>
            <person name="Ren J."/>
            <person name="Stammers D.K."/>
        </authorList>
    </citation>
    <scope>X-RAY CRYSTALLOGRAPHY (2.3 ANGSTROMS) IN COMPLEXES WITH NAD; NADP AND AREA</scope>
    <scope>FUNCTION</scope>
</reference>
<comment type="function">
    <text evidence="1 5 6 7 8">May be a redox sensor protein. Has much higher affinity for NAD(P) than for NAD(P)H. Has similar affinity for NAD and NADP. Negative transcriptional regulator involved in the post-transcriptional modulation of the GATA-type transcription factor areA, forming part of a system controlling nitrogen metabolite repression (By similarity). Interferes with the interaction between areA and target DNA. Overexpression leads to areA inhibition.</text>
</comment>
<comment type="subunit">
    <text evidence="3 4 5 6">Monomer. Interacts with areA.</text>
</comment>
<comment type="subcellular location">
    <subcellularLocation>
        <location evidence="10">Nucleus</location>
    </subcellularLocation>
    <subcellularLocation>
        <location evidence="7">Cytoplasm</location>
    </subcellularLocation>
</comment>
<comment type="induction">
    <text evidence="7">Up-regulated in nitrogen-sufficient conditions and down-regulated in nitrogen-limiting conditions.</text>
</comment>
<comment type="disruption phenotype">
    <text evidence="9">Displays partial derepression of activities subject to nitrogen metabolic repression.</text>
</comment>
<comment type="similarity">
    <text evidence="10">Belongs to the NmrA-type oxidoreductase family.</text>
</comment>
<comment type="caution">
    <text evidence="10">Lacks the conserved Tyr residue in position 127 in the active site triad of Ser-Tyr-Lys that is necessary for dehydrogenase activity, suggesting that it has no oxidoreductase activity.</text>
</comment>
<sequence length="352" mass="38796">MAQQKKTIAVVNATGRQAASLIRVAAAVGHHVRAQVHSLKGLIAEELQAIPNVTLFQGPLLNNVPLMDTLFEGAHLAFINTTSQAGDEIAIGKDLADAAKRAGTIQHYIYSSMPDHSLYGPWPAVPMWAPKFTVENYVRQLGLPSTFVYAGIYNNNFTSLPYPLFQMELMPDGTFEWHAPFDPDIPLPWLDAEHDVGPALLQIFKDGPQKWNGHRIALTFETLSPVQVCAAFSRALNRRVTYVQVPKVEIKVNIPVGYREQLEAIEVVFGEHKAPYFPLPEFSRPAAGSPKGLGPANGKGAGAGMMQGPGGVISQRVTDEARKLWSGWRDMEEYAREVFPIEEEANGLDWML</sequence>
<accession>Q5AU62</accession>
<accession>C8V6Y1</accession>
<accession>O59919</accession>
<keyword id="KW-0002">3D-structure</keyword>
<keyword id="KW-0963">Cytoplasm</keyword>
<keyword id="KW-0520">NAD</keyword>
<keyword id="KW-0521">NADP</keyword>
<keyword id="KW-0539">Nucleus</keyword>
<keyword id="KW-0560">Oxidoreductase</keyword>
<keyword id="KW-1185">Reference proteome</keyword>
<keyword id="KW-0678">Repressor</keyword>
<keyword id="KW-0804">Transcription</keyword>
<keyword id="KW-0805">Transcription regulation</keyword>
<dbReference type="EMBL" id="AF041976">
    <property type="protein sequence ID" value="AAC39442.1"/>
    <property type="molecule type" value="Genomic_DNA"/>
</dbReference>
<dbReference type="EMBL" id="AACD01000141">
    <property type="protein sequence ID" value="EAA59190.1"/>
    <property type="molecule type" value="Genomic_DNA"/>
</dbReference>
<dbReference type="EMBL" id="BN001302">
    <property type="protein sequence ID" value="CBF74025.1"/>
    <property type="molecule type" value="Genomic_DNA"/>
</dbReference>
<dbReference type="RefSeq" id="XP_681437.1">
    <property type="nucleotide sequence ID" value="XM_676345.1"/>
</dbReference>
<dbReference type="PDB" id="1K6I">
    <property type="method" value="X-ray"/>
    <property type="resolution" value="1.80 A"/>
    <property type="chains" value="A=1-352"/>
</dbReference>
<dbReference type="PDB" id="1K6J">
    <property type="method" value="X-ray"/>
    <property type="resolution" value="1.80 A"/>
    <property type="chains" value="A/B=1-352"/>
</dbReference>
<dbReference type="PDB" id="1K6X">
    <property type="method" value="X-ray"/>
    <property type="resolution" value="1.50 A"/>
    <property type="chains" value="A=1-352"/>
</dbReference>
<dbReference type="PDB" id="1TI7">
    <property type="method" value="X-ray"/>
    <property type="resolution" value="1.70 A"/>
    <property type="chains" value="A=1-352"/>
</dbReference>
<dbReference type="PDB" id="1XGK">
    <property type="method" value="X-ray"/>
    <property type="resolution" value="1.40 A"/>
    <property type="chains" value="A=1-352"/>
</dbReference>
<dbReference type="PDB" id="2VUS">
    <property type="method" value="X-ray"/>
    <property type="resolution" value="2.60 A"/>
    <property type="chains" value="A/B/C/D/E/F/G/H=1-352"/>
</dbReference>
<dbReference type="PDB" id="2VUT">
    <property type="method" value="X-ray"/>
    <property type="resolution" value="2.30 A"/>
    <property type="chains" value="A/B/C/D/E/F/G/H=1-352"/>
</dbReference>
<dbReference type="PDB" id="2VUU">
    <property type="method" value="X-ray"/>
    <property type="resolution" value="2.80 A"/>
    <property type="chains" value="A/B/C/D/E/F/G/H=1-352"/>
</dbReference>
<dbReference type="PDBsum" id="1K6I"/>
<dbReference type="PDBsum" id="1K6J"/>
<dbReference type="PDBsum" id="1K6X"/>
<dbReference type="PDBsum" id="1TI7"/>
<dbReference type="PDBsum" id="1XGK"/>
<dbReference type="PDBsum" id="2VUS"/>
<dbReference type="PDBsum" id="2VUT"/>
<dbReference type="PDBsum" id="2VUU"/>
<dbReference type="SMR" id="Q5AU62"/>
<dbReference type="STRING" id="227321.Q5AU62"/>
<dbReference type="EnsemblFungi" id="CBF74025">
    <property type="protein sequence ID" value="CBF74025"/>
    <property type="gene ID" value="ANIA_08168"/>
</dbReference>
<dbReference type="KEGG" id="ani:ANIA_08168"/>
<dbReference type="VEuPathDB" id="FungiDB:AN8168"/>
<dbReference type="eggNOG" id="ENOG502QTW1">
    <property type="taxonomic scope" value="Eukaryota"/>
</dbReference>
<dbReference type="HOGENOM" id="CLU_027360_0_0_1"/>
<dbReference type="InParanoid" id="Q5AU62"/>
<dbReference type="OMA" id="LWEGWRD"/>
<dbReference type="OrthoDB" id="5356836at2759"/>
<dbReference type="EvolutionaryTrace" id="Q5AU62"/>
<dbReference type="Proteomes" id="UP000000560">
    <property type="component" value="Chromosome II"/>
</dbReference>
<dbReference type="GO" id="GO:0005737">
    <property type="term" value="C:cytoplasm"/>
    <property type="evidence" value="ECO:0007669"/>
    <property type="project" value="UniProtKB-SubCell"/>
</dbReference>
<dbReference type="GO" id="GO:0005634">
    <property type="term" value="C:nucleus"/>
    <property type="evidence" value="ECO:0000314"/>
    <property type="project" value="AspGD"/>
</dbReference>
<dbReference type="GO" id="GO:0051287">
    <property type="term" value="F:NAD binding"/>
    <property type="evidence" value="ECO:0000314"/>
    <property type="project" value="UniProtKB"/>
</dbReference>
<dbReference type="GO" id="GO:0070403">
    <property type="term" value="F:NAD+ binding"/>
    <property type="evidence" value="ECO:0000314"/>
    <property type="project" value="UniProtKB"/>
</dbReference>
<dbReference type="GO" id="GO:0070401">
    <property type="term" value="F:NADP+ binding"/>
    <property type="evidence" value="ECO:0000314"/>
    <property type="project" value="UniProtKB"/>
</dbReference>
<dbReference type="GO" id="GO:0016491">
    <property type="term" value="F:oxidoreductase activity"/>
    <property type="evidence" value="ECO:0007669"/>
    <property type="project" value="UniProtKB-KW"/>
</dbReference>
<dbReference type="GO" id="GO:0045892">
    <property type="term" value="P:negative regulation of DNA-templated transcription"/>
    <property type="evidence" value="ECO:0000315"/>
    <property type="project" value="UniProtKB"/>
</dbReference>
<dbReference type="GO" id="GO:0090295">
    <property type="term" value="P:nitrogen catabolite repression of transcription"/>
    <property type="evidence" value="ECO:0000315"/>
    <property type="project" value="AspGD"/>
</dbReference>
<dbReference type="GO" id="GO:0001081">
    <property type="term" value="P:nitrogen catabolite repression of transcription from RNA polymerase II promoter"/>
    <property type="evidence" value="ECO:0000315"/>
    <property type="project" value="AspGD"/>
</dbReference>
<dbReference type="GO" id="GO:0006808">
    <property type="term" value="P:regulation of nitrogen utilization"/>
    <property type="evidence" value="ECO:0000315"/>
    <property type="project" value="UniProtKB"/>
</dbReference>
<dbReference type="CDD" id="cd08947">
    <property type="entry name" value="NmrA_TMR_like_SDR_a"/>
    <property type="match status" value="1"/>
</dbReference>
<dbReference type="Gene3D" id="3.40.50.720">
    <property type="entry name" value="NAD(P)-binding Rossmann-like Domain"/>
    <property type="match status" value="1"/>
</dbReference>
<dbReference type="Gene3D" id="3.90.25.10">
    <property type="entry name" value="UDP-galactose 4-epimerase, domain 1"/>
    <property type="match status" value="1"/>
</dbReference>
<dbReference type="InterPro" id="IPR036291">
    <property type="entry name" value="NAD(P)-bd_dom_sf"/>
</dbReference>
<dbReference type="InterPro" id="IPR008030">
    <property type="entry name" value="NmrA-like"/>
</dbReference>
<dbReference type="InterPro" id="IPR051164">
    <property type="entry name" value="NmrA-like_oxidored"/>
</dbReference>
<dbReference type="PANTHER" id="PTHR42748:SF5">
    <property type="entry name" value="NITROGEN METABOLITE REPRESSION PROTEIN NMRA"/>
    <property type="match status" value="1"/>
</dbReference>
<dbReference type="PANTHER" id="PTHR42748">
    <property type="entry name" value="NITROGEN METABOLITE REPRESSION PROTEIN NMRA FAMILY MEMBER"/>
    <property type="match status" value="1"/>
</dbReference>
<dbReference type="Pfam" id="PF05368">
    <property type="entry name" value="NmrA"/>
    <property type="match status" value="1"/>
</dbReference>
<dbReference type="SUPFAM" id="SSF51735">
    <property type="entry name" value="NAD(P)-binding Rossmann-fold domains"/>
    <property type="match status" value="1"/>
</dbReference>
<protein>
    <recommendedName>
        <fullName>Nitrogen metabolite repression protein nmrA</fullName>
    </recommendedName>
    <alternativeName>
        <fullName>Negative-acting nitrogen regulatory protein nmrA</fullName>
    </alternativeName>
    <alternativeName>
        <fullName>Nitrogen metabolite regulation protein</fullName>
    </alternativeName>
</protein>
<feature type="chain" id="PRO_0000393568" description="Nitrogen metabolite repression protein nmrA">
    <location>
        <begin position="1"/>
        <end position="352"/>
    </location>
</feature>
<feature type="region of interest" description="Disordered" evidence="2">
    <location>
        <begin position="287"/>
        <end position="312"/>
    </location>
</feature>
<feature type="compositionally biased region" description="Gly residues" evidence="2">
    <location>
        <begin position="295"/>
        <end position="311"/>
    </location>
</feature>
<feature type="binding site" evidence="5 14">
    <location>
        <begin position="12"/>
        <end position="17"/>
    </location>
    <ligand>
        <name>NADP(+)</name>
        <dbReference type="ChEBI" id="CHEBI:58349"/>
    </ligand>
</feature>
<feature type="binding site" evidence="4 13">
    <location>
        <begin position="16"/>
        <end position="17"/>
    </location>
    <ligand>
        <name>NAD(+)</name>
        <dbReference type="ChEBI" id="CHEBI:57540"/>
    </ligand>
</feature>
<feature type="binding site" evidence="5 14">
    <location>
        <position position="37"/>
    </location>
    <ligand>
        <name>NADP(+)</name>
        <dbReference type="ChEBI" id="CHEBI:58349"/>
    </ligand>
</feature>
<feature type="binding site" evidence="4 13">
    <location>
        <begin position="80"/>
        <end position="82"/>
    </location>
    <ligand>
        <name>NAD(+)</name>
        <dbReference type="ChEBI" id="CHEBI:57540"/>
    </ligand>
</feature>
<feature type="binding site" evidence="5 14">
    <location>
        <position position="80"/>
    </location>
    <ligand>
        <name>NADP(+)</name>
        <dbReference type="ChEBI" id="CHEBI:58349"/>
    </ligand>
</feature>
<feature type="binding site" evidence="4 13">
    <location>
        <position position="131"/>
    </location>
    <ligand>
        <name>NAD(+)</name>
        <dbReference type="ChEBI" id="CHEBI:57540"/>
    </ligand>
</feature>
<feature type="binding site" evidence="5 14">
    <location>
        <position position="131"/>
    </location>
    <ligand>
        <name>NADP(+)</name>
        <dbReference type="ChEBI" id="CHEBI:58349"/>
    </ligand>
</feature>
<feature type="binding site" evidence="4 13">
    <location>
        <begin position="153"/>
        <end position="156"/>
    </location>
    <ligand>
        <name>NAD(+)</name>
        <dbReference type="ChEBI" id="CHEBI:57540"/>
    </ligand>
</feature>
<feature type="binding site" evidence="5 14">
    <location>
        <begin position="153"/>
        <end position="156"/>
    </location>
    <ligand>
        <name>NADP(+)</name>
        <dbReference type="ChEBI" id="CHEBI:58349"/>
    </ligand>
</feature>
<feature type="mutagenesis site" description="13-fold increase in the Kd for NAD; 2-fold increase in the Kd for NADP and 2-fold increase in the Kd for areA; when associated with G-18." evidence="6">
    <original>N</original>
    <variation>G</variation>
    <location>
        <position position="12"/>
    </location>
</feature>
<feature type="mutagenesis site" description="4-fold increase in the Kd for NAD; 7-fold increase in the Kd for NADP and no change in the Kd for areA." evidence="6">
    <original>T</original>
    <variation>V</variation>
    <location>
        <position position="14"/>
    </location>
</feature>
<feature type="mutagenesis site" description="13-fold increase in the Kd for NAD; 2-fold increase in the Kd for NADP and 2-fold increase in the Kd for areA; when associated with G-12." evidence="6">
    <original>A</original>
    <variation>G</variation>
    <location>
        <position position="18"/>
    </location>
</feature>
<feature type="mutagenesis site" description="4-fold decrease in the Kd for NAD; 24% increase in the Kd for NADP and no change in the Kd for areA." evidence="6">
    <original>H</original>
    <variation>W</variation>
    <location>
        <position position="37"/>
    </location>
</feature>
<feature type="mutagenesis site" description="No changes in the Kd for NAD and NADP and almost complete loss of affinity for areA; when associated with N-195." evidence="6">
    <original>E</original>
    <variation>Q</variation>
    <location>
        <position position="193"/>
    </location>
</feature>
<feature type="mutagenesis site" description="No changes in the Kd for NAD and NADP and almost complete loss of affinity for areA; when associated with Q-193." evidence="6">
    <original>D</original>
    <variation>N</variation>
    <location>
        <position position="195"/>
    </location>
</feature>
<feature type="mutagenesis site" description="No changes in the Kd for NAD and NADP and 2-fold increase in the Kd for areA; when associated with Y-204." evidence="6">
    <original>Q</original>
    <variation>E</variation>
    <location>
        <position position="202"/>
    </location>
</feature>
<feature type="mutagenesis site" description="No changes in the Kd for NAD and NADP and 2-fold increase in the Kd for areA; when associated with E-202." evidence="6">
    <original>F</original>
    <variation>Y</variation>
    <location>
        <position position="204"/>
    </location>
</feature>
<feature type="mutagenesis site" description="No changes in the Kd for NAD; NADP and areA; when associated with Q-266." evidence="6">
    <original>E</original>
    <variation>Q</variation>
    <location>
        <position position="263"/>
    </location>
</feature>
<feature type="mutagenesis site" description="No changes in the Kd for NAD; NADP and areA; when associated with Q-263." evidence="6">
    <original>E</original>
    <variation>Q</variation>
    <location>
        <position position="266"/>
    </location>
</feature>
<feature type="sequence conflict" description="In Ref. 1; AAC39442." evidence="10" ref="1">
    <original>R</original>
    <variation>L</variation>
    <location>
        <position position="238"/>
    </location>
</feature>
<feature type="strand" evidence="18">
    <location>
        <begin position="8"/>
        <end position="12"/>
    </location>
</feature>
<feature type="helix" evidence="18">
    <location>
        <begin position="16"/>
        <end position="27"/>
    </location>
</feature>
<feature type="strand" evidence="18">
    <location>
        <begin position="32"/>
        <end position="37"/>
    </location>
</feature>
<feature type="helix" evidence="18">
    <location>
        <begin position="42"/>
        <end position="48"/>
    </location>
</feature>
<feature type="strand" evidence="18">
    <location>
        <begin position="53"/>
        <end position="58"/>
    </location>
</feature>
<feature type="helix" evidence="18">
    <location>
        <begin position="64"/>
        <end position="71"/>
    </location>
</feature>
<feature type="strand" evidence="18">
    <location>
        <begin position="75"/>
        <end position="79"/>
    </location>
</feature>
<feature type="helix" evidence="17">
    <location>
        <begin position="83"/>
        <end position="85"/>
    </location>
</feature>
<feature type="helix" evidence="18">
    <location>
        <begin position="88"/>
        <end position="102"/>
    </location>
</feature>
<feature type="strand" evidence="18">
    <location>
        <begin position="106"/>
        <end position="112"/>
    </location>
</feature>
<feature type="helix" evidence="18">
    <location>
        <begin position="116"/>
        <end position="118"/>
    </location>
</feature>
<feature type="strand" evidence="15">
    <location>
        <begin position="119"/>
        <end position="121"/>
    </location>
</feature>
<feature type="turn" evidence="18">
    <location>
        <begin position="126"/>
        <end position="128"/>
    </location>
</feature>
<feature type="helix" evidence="18">
    <location>
        <begin position="129"/>
        <end position="139"/>
    </location>
</feature>
<feature type="strand" evidence="18">
    <location>
        <begin position="141"/>
        <end position="143"/>
    </location>
</feature>
<feature type="strand" evidence="18">
    <location>
        <begin position="145"/>
        <end position="150"/>
    </location>
</feature>
<feature type="helix" evidence="18">
    <location>
        <begin position="154"/>
        <end position="156"/>
    </location>
</feature>
<feature type="strand" evidence="18">
    <location>
        <begin position="158"/>
        <end position="161"/>
    </location>
</feature>
<feature type="strand" evidence="18">
    <location>
        <begin position="166"/>
        <end position="169"/>
    </location>
</feature>
<feature type="strand" evidence="18">
    <location>
        <begin position="175"/>
        <end position="181"/>
    </location>
</feature>
<feature type="strand" evidence="19">
    <location>
        <begin position="183"/>
        <end position="185"/>
    </location>
</feature>
<feature type="strand" evidence="18">
    <location>
        <begin position="187"/>
        <end position="190"/>
    </location>
</feature>
<feature type="helix" evidence="18">
    <location>
        <begin position="192"/>
        <end position="206"/>
    </location>
</feature>
<feature type="helix" evidence="18">
    <location>
        <begin position="208"/>
        <end position="211"/>
    </location>
</feature>
<feature type="strand" evidence="18">
    <location>
        <begin position="215"/>
        <end position="218"/>
    </location>
</feature>
<feature type="strand" evidence="18">
    <location>
        <begin position="220"/>
        <end position="223"/>
    </location>
</feature>
<feature type="helix" evidence="18">
    <location>
        <begin position="225"/>
        <end position="236"/>
    </location>
</feature>
<feature type="strand" evidence="18">
    <location>
        <begin position="240"/>
        <end position="244"/>
    </location>
</feature>
<feature type="helix" evidence="18">
    <location>
        <begin position="256"/>
        <end position="269"/>
    </location>
</feature>
<feature type="helix" evidence="18">
    <location>
        <begin position="280"/>
        <end position="282"/>
    </location>
</feature>
<feature type="strand" evidence="16">
    <location>
        <begin position="283"/>
        <end position="285"/>
    </location>
</feature>
<feature type="helix" evidence="18">
    <location>
        <begin position="319"/>
        <end position="324"/>
    </location>
</feature>
<feature type="helix" evidence="18">
    <location>
        <begin position="331"/>
        <end position="337"/>
    </location>
</feature>
<feature type="helix" evidence="18">
    <location>
        <begin position="339"/>
        <end position="345"/>
    </location>
</feature>
<gene>
    <name type="primary">nmrA</name>
    <name type="ORF">AN8168</name>
</gene>